<organism>
    <name type="scientific">Helicobacter pylori (strain ATCC 700392 / 26695)</name>
    <name type="common">Campylobacter pylori</name>
    <dbReference type="NCBI Taxonomy" id="85962"/>
    <lineage>
        <taxon>Bacteria</taxon>
        <taxon>Pseudomonadati</taxon>
        <taxon>Campylobacterota</taxon>
        <taxon>Epsilonproteobacteria</taxon>
        <taxon>Campylobacterales</taxon>
        <taxon>Helicobacteraceae</taxon>
        <taxon>Helicobacter</taxon>
    </lineage>
</organism>
<evidence type="ECO:0000250" key="1">
    <source>
        <dbReference type="UniProtKB" id="D5ARP7"/>
    </source>
</evidence>
<evidence type="ECO:0000250" key="2">
    <source>
        <dbReference type="UniProtKB" id="D9IA45"/>
    </source>
</evidence>
<evidence type="ECO:0000250" key="3">
    <source>
        <dbReference type="UniProtKB" id="O87196"/>
    </source>
</evidence>
<evidence type="ECO:0000250" key="4">
    <source>
        <dbReference type="UniProtKB" id="Q3J015"/>
    </source>
</evidence>
<evidence type="ECO:0000250" key="5">
    <source>
        <dbReference type="UniProtKB" id="Q52689"/>
    </source>
</evidence>
<evidence type="ECO:0000250" key="6">
    <source>
        <dbReference type="UniProtKB" id="Q8KS19"/>
    </source>
</evidence>
<evidence type="ECO:0000255" key="7"/>
<evidence type="ECO:0000255" key="8">
    <source>
        <dbReference type="PROSITE-ProRule" id="PRU00433"/>
    </source>
</evidence>
<evidence type="ECO:0000305" key="9"/>
<comment type="function">
    <text evidence="1 2 4">C-type cytochrome. Part of the cbb3-type cytochrome c oxidase complex. CcoP subunit is required for transferring electrons from donor cytochrome c via its heme groups to CcoO subunit. From there, electrons are shuttled to the catalytic binuclear center of CcoN subunit where oxygen reduction takes place. The complex also functions as a proton pump (By similarity).</text>
</comment>
<comment type="cofactor">
    <cofactor evidence="2">
        <name>heme c</name>
        <dbReference type="ChEBI" id="CHEBI:61717"/>
    </cofactor>
    <text evidence="2">Binds 2 heme C groups per subunit.</text>
</comment>
<comment type="pathway">
    <text evidence="1">Energy metabolism; oxidative phosphorylation.</text>
</comment>
<comment type="subunit">
    <text evidence="1">Component of the cbb3-type cytochrome c oxidase at least composed of CcoN, CcoO, CcoQ and CcoP.</text>
</comment>
<comment type="subcellular location">
    <subcellularLocation>
        <location evidence="6 7">Cell inner membrane</location>
        <topology evidence="6 7">Multi-pass membrane protein</topology>
    </subcellularLocation>
</comment>
<comment type="similarity">
    <text evidence="9">Belongs to the CcoP / FixP family.</text>
</comment>
<protein>
    <recommendedName>
        <fullName evidence="1">Cbb3-type cytochrome c oxidase subunit CcoP</fullName>
        <shortName evidence="1">Cbb3-Cox subunit CcoP</shortName>
    </recommendedName>
    <alternativeName>
        <fullName evidence="5">C-type cytochrome CcoP</fullName>
        <shortName evidence="1">Cyt c(P)</shortName>
    </alternativeName>
    <alternativeName>
        <fullName evidence="1">Cytochrome c oxidase subunit III</fullName>
    </alternativeName>
</protein>
<proteinExistence type="inferred from homology"/>
<gene>
    <name evidence="3" type="primary">ccoP</name>
    <name type="ordered locus">HP_0147</name>
</gene>
<name>CCOP_HELPY</name>
<feature type="chain" id="PRO_0000412285" description="Cbb3-type cytochrome c oxidase subunit CcoP">
    <location>
        <begin position="1"/>
        <end position="286"/>
    </location>
</feature>
<feature type="transmembrane region" description="Helical" evidence="7">
    <location>
        <begin position="11"/>
        <end position="31"/>
    </location>
</feature>
<feature type="transmembrane region" description="Helical" evidence="7">
    <location>
        <begin position="62"/>
        <end position="82"/>
    </location>
</feature>
<feature type="domain" description="Cytochrome c 1" evidence="8">
    <location>
        <begin position="116"/>
        <end position="195"/>
    </location>
</feature>
<feature type="domain" description="Cytochrome c 2" evidence="8">
    <location>
        <begin position="205"/>
        <end position="286"/>
    </location>
</feature>
<feature type="binding site" description="covalent" evidence="2">
    <location>
        <position position="129"/>
    </location>
    <ligand>
        <name>heme c</name>
        <dbReference type="ChEBI" id="CHEBI:61717"/>
        <label>1</label>
    </ligand>
</feature>
<feature type="binding site" description="covalent" evidence="2">
    <location>
        <position position="132"/>
    </location>
    <ligand>
        <name>heme c</name>
        <dbReference type="ChEBI" id="CHEBI:61717"/>
        <label>1</label>
    </ligand>
</feature>
<feature type="binding site" description="axial binding residue" evidence="2">
    <location>
        <position position="133"/>
    </location>
    <ligand>
        <name>heme c</name>
        <dbReference type="ChEBI" id="CHEBI:61717"/>
        <label>1</label>
    </ligand>
    <ligandPart>
        <name>Fe</name>
        <dbReference type="ChEBI" id="CHEBI:18248"/>
    </ligandPart>
</feature>
<feature type="binding site" description="axial binding residue" evidence="2">
    <location>
        <position position="174"/>
    </location>
    <ligand>
        <name>heme c</name>
        <dbReference type="ChEBI" id="CHEBI:61717"/>
        <label>2</label>
    </ligand>
    <ligandPart>
        <name>Fe</name>
        <dbReference type="ChEBI" id="CHEBI:18248"/>
    </ligandPart>
</feature>
<feature type="binding site" description="covalent" evidence="2">
    <location>
        <position position="219"/>
    </location>
    <ligand>
        <name>heme c</name>
        <dbReference type="ChEBI" id="CHEBI:61717"/>
        <label>2</label>
    </ligand>
</feature>
<feature type="binding site" description="covalent" evidence="2">
    <location>
        <position position="222"/>
    </location>
    <ligand>
        <name>heme c</name>
        <dbReference type="ChEBI" id="CHEBI:61717"/>
        <label>2</label>
    </ligand>
</feature>
<feature type="binding site" description="axial binding residue" evidence="2">
    <location>
        <position position="223"/>
    </location>
    <ligand>
        <name>heme c</name>
        <dbReference type="ChEBI" id="CHEBI:61717"/>
        <label>2</label>
    </ligand>
    <ligandPart>
        <name>Fe</name>
        <dbReference type="ChEBI" id="CHEBI:18248"/>
    </ligandPart>
</feature>
<feature type="binding site" description="axial binding residue" evidence="2">
    <location>
        <position position="264"/>
    </location>
    <ligand>
        <name>heme c</name>
        <dbReference type="ChEBI" id="CHEBI:61717"/>
        <label>1</label>
    </ligand>
    <ligandPart>
        <name>Fe</name>
        <dbReference type="ChEBI" id="CHEBI:18248"/>
    </ligandPart>
</feature>
<accession>O24958</accession>
<sequence>MDFLNDHINVFGLIAALVILVLTIYESSSLIKEMRDSKSQGELVENGHLIDGIGEFANNVPVGWIASFMCTIVWAFWYFFFGYPLNSFSQIGQYNEEVKAHNQKFEAKWKHLGQKELVDMGQGIFLVHCSQCHGITAEGLHGSAQNLVRWGKEEGIMDTIKHGSKGMDYLAGEMPAMELDEKDAKAIASYVMAELSSVKKTKNPQLIDKGKELFESMGCTGCHGNDGKGLQENQVFAADLTAYGTENFLRNILTHGKKGNIGHMPSFKYKNFSDLQVKALLNLSNR</sequence>
<reference key="1">
    <citation type="journal article" date="1997" name="Nature">
        <title>The complete genome sequence of the gastric pathogen Helicobacter pylori.</title>
        <authorList>
            <person name="Tomb J.-F."/>
            <person name="White O."/>
            <person name="Kerlavage A.R."/>
            <person name="Clayton R.A."/>
            <person name="Sutton G.G."/>
            <person name="Fleischmann R.D."/>
            <person name="Ketchum K.A."/>
            <person name="Klenk H.-P."/>
            <person name="Gill S.R."/>
            <person name="Dougherty B.A."/>
            <person name="Nelson K.E."/>
            <person name="Quackenbush J."/>
            <person name="Zhou L."/>
            <person name="Kirkness E.F."/>
            <person name="Peterson S.N."/>
            <person name="Loftus B.J."/>
            <person name="Richardson D.L."/>
            <person name="Dodson R.J."/>
            <person name="Khalak H.G."/>
            <person name="Glodek A."/>
            <person name="McKenney K."/>
            <person name="FitzGerald L.M."/>
            <person name="Lee N."/>
            <person name="Adams M.D."/>
            <person name="Hickey E.K."/>
            <person name="Berg D.E."/>
            <person name="Gocayne J.D."/>
            <person name="Utterback T.R."/>
            <person name="Peterson J.D."/>
            <person name="Kelley J.M."/>
            <person name="Cotton M.D."/>
            <person name="Weidman J.F."/>
            <person name="Fujii C."/>
            <person name="Bowman C."/>
            <person name="Watthey L."/>
            <person name="Wallin E."/>
            <person name="Hayes W.S."/>
            <person name="Borodovsky M."/>
            <person name="Karp P.D."/>
            <person name="Smith H.O."/>
            <person name="Fraser C.M."/>
            <person name="Venter J.C."/>
        </authorList>
    </citation>
    <scope>NUCLEOTIDE SEQUENCE [LARGE SCALE GENOMIC DNA]</scope>
    <source>
        <strain>ATCC 700392 / 26695</strain>
    </source>
</reference>
<dbReference type="EMBL" id="AE000511">
    <property type="protein sequence ID" value="AAD07216.1"/>
    <property type="molecule type" value="Genomic_DNA"/>
</dbReference>
<dbReference type="PIR" id="C64538">
    <property type="entry name" value="C64538"/>
</dbReference>
<dbReference type="RefSeq" id="NP_206946.1">
    <property type="nucleotide sequence ID" value="NC_000915.1"/>
</dbReference>
<dbReference type="SMR" id="O24958"/>
<dbReference type="IntAct" id="O24958">
    <property type="interactions" value="1"/>
</dbReference>
<dbReference type="MINT" id="O24958"/>
<dbReference type="STRING" id="85962.HP_0147"/>
<dbReference type="PaxDb" id="85962-C694_00730"/>
<dbReference type="EnsemblBacteria" id="AAD07216">
    <property type="protein sequence ID" value="AAD07216"/>
    <property type="gene ID" value="HP_0147"/>
</dbReference>
<dbReference type="KEGG" id="heo:C694_00730"/>
<dbReference type="KEGG" id="hpy:HP_0147"/>
<dbReference type="PATRIC" id="fig|85962.47.peg.159"/>
<dbReference type="eggNOG" id="COG2010">
    <property type="taxonomic scope" value="Bacteria"/>
</dbReference>
<dbReference type="InParanoid" id="O24958"/>
<dbReference type="OrthoDB" id="9811281at2"/>
<dbReference type="PhylomeDB" id="O24958"/>
<dbReference type="UniPathway" id="UPA00705"/>
<dbReference type="Proteomes" id="UP000000429">
    <property type="component" value="Chromosome"/>
</dbReference>
<dbReference type="GO" id="GO:0005886">
    <property type="term" value="C:plasma membrane"/>
    <property type="evidence" value="ECO:0007669"/>
    <property type="project" value="UniProtKB-SubCell"/>
</dbReference>
<dbReference type="GO" id="GO:0004129">
    <property type="term" value="F:cytochrome-c oxidase activity"/>
    <property type="evidence" value="ECO:0000318"/>
    <property type="project" value="GO_Central"/>
</dbReference>
<dbReference type="GO" id="GO:0020037">
    <property type="term" value="F:heme binding"/>
    <property type="evidence" value="ECO:0007669"/>
    <property type="project" value="InterPro"/>
</dbReference>
<dbReference type="GO" id="GO:0046872">
    <property type="term" value="F:metal ion binding"/>
    <property type="evidence" value="ECO:0007669"/>
    <property type="project" value="UniProtKB-KW"/>
</dbReference>
<dbReference type="GO" id="GO:0006119">
    <property type="term" value="P:oxidative phosphorylation"/>
    <property type="evidence" value="ECO:0007669"/>
    <property type="project" value="UniProtKB-UniPathway"/>
</dbReference>
<dbReference type="Gene3D" id="6.10.280.130">
    <property type="match status" value="1"/>
</dbReference>
<dbReference type="Gene3D" id="1.10.760.10">
    <property type="entry name" value="Cytochrome c-like domain"/>
    <property type="match status" value="2"/>
</dbReference>
<dbReference type="InterPro" id="IPR032858">
    <property type="entry name" value="CcoP_N"/>
</dbReference>
<dbReference type="InterPro" id="IPR038414">
    <property type="entry name" value="CcoP_N_sf"/>
</dbReference>
<dbReference type="InterPro" id="IPR009056">
    <property type="entry name" value="Cyt_c-like_dom"/>
</dbReference>
<dbReference type="InterPro" id="IPR036909">
    <property type="entry name" value="Cyt_c-like_dom_sf"/>
</dbReference>
<dbReference type="InterPro" id="IPR004678">
    <property type="entry name" value="Cyt_c_oxidase_cbb3_su3"/>
</dbReference>
<dbReference type="InterPro" id="IPR050597">
    <property type="entry name" value="Cytochrome_c_Oxidase_Subunit"/>
</dbReference>
<dbReference type="NCBIfam" id="TIGR00782">
    <property type="entry name" value="ccoP"/>
    <property type="match status" value="1"/>
</dbReference>
<dbReference type="PANTHER" id="PTHR33751">
    <property type="entry name" value="CBB3-TYPE CYTOCHROME C OXIDASE SUBUNIT FIXP"/>
    <property type="match status" value="1"/>
</dbReference>
<dbReference type="PANTHER" id="PTHR33751:SF1">
    <property type="entry name" value="CBB3-TYPE CYTOCHROME C OXIDASE SUBUNIT FIXP"/>
    <property type="match status" value="1"/>
</dbReference>
<dbReference type="Pfam" id="PF13442">
    <property type="entry name" value="Cytochrome_CBB3"/>
    <property type="match status" value="2"/>
</dbReference>
<dbReference type="Pfam" id="PF14715">
    <property type="entry name" value="FixP_N"/>
    <property type="match status" value="1"/>
</dbReference>
<dbReference type="PIRSF" id="PIRSF000006">
    <property type="entry name" value="Cbb3-Cox_fixP"/>
    <property type="match status" value="1"/>
</dbReference>
<dbReference type="SUPFAM" id="SSF46626">
    <property type="entry name" value="Cytochrome c"/>
    <property type="match status" value="2"/>
</dbReference>
<dbReference type="PROSITE" id="PS51007">
    <property type="entry name" value="CYTC"/>
    <property type="match status" value="2"/>
</dbReference>
<keyword id="KW-0997">Cell inner membrane</keyword>
<keyword id="KW-1003">Cell membrane</keyword>
<keyword id="KW-0249">Electron transport</keyword>
<keyword id="KW-0349">Heme</keyword>
<keyword id="KW-0375">Hydrogen ion transport</keyword>
<keyword id="KW-0406">Ion transport</keyword>
<keyword id="KW-0408">Iron</keyword>
<keyword id="KW-0472">Membrane</keyword>
<keyword id="KW-0479">Metal-binding</keyword>
<keyword id="KW-0560">Oxidoreductase</keyword>
<keyword id="KW-1185">Reference proteome</keyword>
<keyword id="KW-0677">Repeat</keyword>
<keyword id="KW-0679">Respiratory chain</keyword>
<keyword id="KW-0812">Transmembrane</keyword>
<keyword id="KW-1133">Transmembrane helix</keyword>
<keyword id="KW-0813">Transport</keyword>